<name>SYMM_BOVIN</name>
<comment type="catalytic activity">
    <reaction>
        <text>tRNA(Met) + L-methionine + ATP = L-methionyl-tRNA(Met) + AMP + diphosphate</text>
        <dbReference type="Rhea" id="RHEA:13481"/>
        <dbReference type="Rhea" id="RHEA-COMP:9667"/>
        <dbReference type="Rhea" id="RHEA-COMP:9698"/>
        <dbReference type="ChEBI" id="CHEBI:30616"/>
        <dbReference type="ChEBI" id="CHEBI:33019"/>
        <dbReference type="ChEBI" id="CHEBI:57844"/>
        <dbReference type="ChEBI" id="CHEBI:78442"/>
        <dbReference type="ChEBI" id="CHEBI:78530"/>
        <dbReference type="ChEBI" id="CHEBI:456215"/>
        <dbReference type="EC" id="6.1.1.10"/>
    </reaction>
</comment>
<comment type="subcellular location">
    <subcellularLocation>
        <location evidence="1">Mitochondrion matrix</location>
    </subcellularLocation>
</comment>
<comment type="similarity">
    <text evidence="3">Belongs to the class-I aminoacyl-tRNA synthetase family.</text>
</comment>
<gene>
    <name type="primary">MARS2</name>
</gene>
<reference key="1">
    <citation type="submission" date="2007-06" db="EMBL/GenBank/DDBJ databases">
        <authorList>
            <consortium name="NIH - Mammalian Gene Collection (MGC) project"/>
        </authorList>
    </citation>
    <scope>NUCLEOTIDE SEQUENCE [LARGE SCALE MRNA]</scope>
    <source>
        <strain>Hereford</strain>
        <tissue>Fetal skin</tissue>
    </source>
</reference>
<reference key="2">
    <citation type="journal article" date="2005" name="BMC Genomics">
        <title>Characterization of 954 bovine full-CDS cDNA sequences.</title>
        <authorList>
            <person name="Harhay G.P."/>
            <person name="Sonstegard T.S."/>
            <person name="Keele J.W."/>
            <person name="Heaton M.P."/>
            <person name="Clawson M.L."/>
            <person name="Snelling W.M."/>
            <person name="Wiedmann R.T."/>
            <person name="Van Tassell C.P."/>
            <person name="Smith T.P.L."/>
        </authorList>
    </citation>
    <scope>NUCLEOTIDE SEQUENCE [LARGE SCALE MRNA] OF 5-593</scope>
</reference>
<keyword id="KW-0030">Aminoacyl-tRNA synthetase</keyword>
<keyword id="KW-0067">ATP-binding</keyword>
<keyword id="KW-0436">Ligase</keyword>
<keyword id="KW-0496">Mitochondrion</keyword>
<keyword id="KW-0547">Nucleotide-binding</keyword>
<keyword id="KW-0648">Protein biosynthesis</keyword>
<keyword id="KW-1185">Reference proteome</keyword>
<keyword id="KW-0809">Transit peptide</keyword>
<evidence type="ECO:0000250" key="1"/>
<evidence type="ECO:0000255" key="2"/>
<evidence type="ECO:0000305" key="3"/>
<protein>
    <recommendedName>
        <fullName>Methionine--tRNA ligase, mitochondrial</fullName>
        <ecNumber>6.1.1.10</ecNumber>
    </recommendedName>
    <alternativeName>
        <fullName>Methionyl-tRNA synthetase 2</fullName>
    </alternativeName>
    <alternativeName>
        <fullName>Mitochondrial methionyl-tRNA synthetase</fullName>
        <shortName>MtMetRS</shortName>
    </alternativeName>
</protein>
<sequence length="593" mass="66648">MLRVSAFRLLGRRGASRVSLLEDFSFRYYSSGPLGVRDDTRDSRAYFTTPIFYVNAAPHIGHLYSALLADALCRHHRLRVPSDAATGFSTGTDEHGLKIQQAAAAAGLAPSELCDRVSAQFQQLFREADISSTDFIRTTEARHRIAVQHFWGMLKSRGLLYKGLYEGWYCASDECFLPEAKVTRQPGPSGDLCPVSLESGHPVSWTKEENYIFRLSQFREPLQQWLRGDPQAITPEPFHHTVLQWLEEELPDLSVSRRSSHLHWGIPVPGDDSQTIYVWLDALVNYLTVVGYPDAEFKSWWPNTSHIIGKDILKFHAIYWPALLLGAGMSPPHRIYVHSHWTVCGQKMSKSLGNVVDPRTCLDRYTVDGFRYFLLRQGVPSWDCDYYDEKVVKLLDSELADALGGLLNRCTANKINPSGIYPAFCATCFPSEPGLVGPSGRAQAEDYALVSAVATLPKQVADHYDNFQIYKALEAVSSCVRQTNGFVQRHAPWKLNWESPVDAPWLGTVLHVALECLRVFGTLLQPVTPSLADRLLSRLGVSSTERSLGELHFLSRFYGHPSPFEGRRLGPETGVLFPRLDQSRSWLVKAHKT</sequence>
<proteinExistence type="evidence at transcript level"/>
<dbReference type="EC" id="6.1.1.10"/>
<dbReference type="EMBL" id="BC146211">
    <property type="protein sequence ID" value="AAI46212.1"/>
    <property type="molecule type" value="mRNA"/>
</dbReference>
<dbReference type="EMBL" id="BT026161">
    <property type="protein sequence ID" value="ABG67000.1"/>
    <property type="molecule type" value="mRNA"/>
</dbReference>
<dbReference type="RefSeq" id="NP_001092441.1">
    <property type="nucleotide sequence ID" value="NM_001098971.1"/>
</dbReference>
<dbReference type="SMR" id="A6H7E1"/>
<dbReference type="FunCoup" id="A6H7E1">
    <property type="interactions" value="2020"/>
</dbReference>
<dbReference type="STRING" id="9913.ENSBTAP00000042279"/>
<dbReference type="PaxDb" id="9913-ENSBTAP00000042279"/>
<dbReference type="Ensembl" id="ENSBTAT00000002662.7">
    <property type="protein sequence ID" value="ENSBTAP00000042279.3"/>
    <property type="gene ID" value="ENSBTAG00000002056.7"/>
</dbReference>
<dbReference type="GeneID" id="514726"/>
<dbReference type="KEGG" id="bta:514726"/>
<dbReference type="CTD" id="92935"/>
<dbReference type="VEuPathDB" id="HostDB:ENSBTAG00000002056"/>
<dbReference type="VGNC" id="VGNC:31251">
    <property type="gene designation" value="MARS2"/>
</dbReference>
<dbReference type="eggNOG" id="KOG0436">
    <property type="taxonomic scope" value="Eukaryota"/>
</dbReference>
<dbReference type="GeneTree" id="ENSGT00550000075136"/>
<dbReference type="HOGENOM" id="CLU_009710_9_0_1"/>
<dbReference type="InParanoid" id="A6H7E1"/>
<dbReference type="OMA" id="NMFLPDR"/>
<dbReference type="OrthoDB" id="5844513at2759"/>
<dbReference type="TreeFam" id="TF105709"/>
<dbReference type="Proteomes" id="UP000009136">
    <property type="component" value="Chromosome 2"/>
</dbReference>
<dbReference type="Bgee" id="ENSBTAG00000002056">
    <property type="expression patterns" value="Expressed in placenta and 103 other cell types or tissues"/>
</dbReference>
<dbReference type="GO" id="GO:0005759">
    <property type="term" value="C:mitochondrial matrix"/>
    <property type="evidence" value="ECO:0007669"/>
    <property type="project" value="UniProtKB-SubCell"/>
</dbReference>
<dbReference type="GO" id="GO:0005739">
    <property type="term" value="C:mitochondrion"/>
    <property type="evidence" value="ECO:0000318"/>
    <property type="project" value="GO_Central"/>
</dbReference>
<dbReference type="GO" id="GO:0005524">
    <property type="term" value="F:ATP binding"/>
    <property type="evidence" value="ECO:0007669"/>
    <property type="project" value="UniProtKB-KW"/>
</dbReference>
<dbReference type="GO" id="GO:0004825">
    <property type="term" value="F:methionine-tRNA ligase activity"/>
    <property type="evidence" value="ECO:0000318"/>
    <property type="project" value="GO_Central"/>
</dbReference>
<dbReference type="GO" id="GO:0006431">
    <property type="term" value="P:methionyl-tRNA aminoacylation"/>
    <property type="evidence" value="ECO:0000318"/>
    <property type="project" value="GO_Central"/>
</dbReference>
<dbReference type="CDD" id="cd07957">
    <property type="entry name" value="Anticodon_Ia_Met"/>
    <property type="match status" value="1"/>
</dbReference>
<dbReference type="CDD" id="cd00814">
    <property type="entry name" value="MetRS_core"/>
    <property type="match status" value="1"/>
</dbReference>
<dbReference type="FunFam" id="2.170.220.10:FF:000001">
    <property type="entry name" value="methionine--tRNA ligase, mitochondrial"/>
    <property type="match status" value="1"/>
</dbReference>
<dbReference type="FunFam" id="1.10.730.10:FF:000022">
    <property type="entry name" value="Methionyl-tRNA synthetase 2, mitochondrial"/>
    <property type="match status" value="1"/>
</dbReference>
<dbReference type="Gene3D" id="2.170.220.10">
    <property type="match status" value="1"/>
</dbReference>
<dbReference type="Gene3D" id="3.40.50.620">
    <property type="entry name" value="HUPs"/>
    <property type="match status" value="1"/>
</dbReference>
<dbReference type="Gene3D" id="1.10.730.10">
    <property type="entry name" value="Isoleucyl-tRNA Synthetase, Domain 1"/>
    <property type="match status" value="1"/>
</dbReference>
<dbReference type="InterPro" id="IPR041872">
    <property type="entry name" value="Anticodon_Met"/>
</dbReference>
<dbReference type="InterPro" id="IPR014758">
    <property type="entry name" value="Met-tRNA_synth"/>
</dbReference>
<dbReference type="InterPro" id="IPR023457">
    <property type="entry name" value="Met-tRNA_synth_2"/>
</dbReference>
<dbReference type="InterPro" id="IPR015413">
    <property type="entry name" value="Methionyl/Leucyl_tRNA_Synth"/>
</dbReference>
<dbReference type="InterPro" id="IPR033911">
    <property type="entry name" value="MetRS_core"/>
</dbReference>
<dbReference type="InterPro" id="IPR014729">
    <property type="entry name" value="Rossmann-like_a/b/a_fold"/>
</dbReference>
<dbReference type="InterPro" id="IPR009080">
    <property type="entry name" value="tRNAsynth_Ia_anticodon-bd"/>
</dbReference>
<dbReference type="NCBIfam" id="TIGR00398">
    <property type="entry name" value="metG"/>
    <property type="match status" value="1"/>
</dbReference>
<dbReference type="PANTHER" id="PTHR43326:SF1">
    <property type="entry name" value="METHIONINE--TRNA LIGASE, MITOCHONDRIAL"/>
    <property type="match status" value="1"/>
</dbReference>
<dbReference type="PANTHER" id="PTHR43326">
    <property type="entry name" value="METHIONYL-TRNA SYNTHETASE"/>
    <property type="match status" value="1"/>
</dbReference>
<dbReference type="Pfam" id="PF19303">
    <property type="entry name" value="Anticodon_3"/>
    <property type="match status" value="1"/>
</dbReference>
<dbReference type="Pfam" id="PF09334">
    <property type="entry name" value="tRNA-synt_1g"/>
    <property type="match status" value="1"/>
</dbReference>
<dbReference type="PRINTS" id="PR01041">
    <property type="entry name" value="TRNASYNTHMET"/>
</dbReference>
<dbReference type="SUPFAM" id="SSF47323">
    <property type="entry name" value="Anticodon-binding domain of a subclass of class I aminoacyl-tRNA synthetases"/>
    <property type="match status" value="1"/>
</dbReference>
<dbReference type="SUPFAM" id="SSF52374">
    <property type="entry name" value="Nucleotidylyl transferase"/>
    <property type="match status" value="1"/>
</dbReference>
<feature type="transit peptide" description="Mitochondrion" evidence="2">
    <location>
        <begin position="1"/>
        <end position="29"/>
    </location>
</feature>
<feature type="chain" id="PRO_0000328569" description="Methionine--tRNA ligase, mitochondrial">
    <location>
        <begin position="30"/>
        <end position="593"/>
    </location>
</feature>
<feature type="short sequence motif" description="'HIGH' region">
    <location>
        <begin position="52"/>
        <end position="62"/>
    </location>
</feature>
<feature type="short sequence motif" description="'KMSKS' region">
    <location>
        <begin position="347"/>
        <end position="351"/>
    </location>
</feature>
<feature type="binding site" evidence="1">
    <location>
        <position position="350"/>
    </location>
    <ligand>
        <name>ATP</name>
        <dbReference type="ChEBI" id="CHEBI:30616"/>
    </ligand>
</feature>
<accession>A6H7E1</accession>
<accession>Q0V8Q7</accession>
<organism>
    <name type="scientific">Bos taurus</name>
    <name type="common">Bovine</name>
    <dbReference type="NCBI Taxonomy" id="9913"/>
    <lineage>
        <taxon>Eukaryota</taxon>
        <taxon>Metazoa</taxon>
        <taxon>Chordata</taxon>
        <taxon>Craniata</taxon>
        <taxon>Vertebrata</taxon>
        <taxon>Euteleostomi</taxon>
        <taxon>Mammalia</taxon>
        <taxon>Eutheria</taxon>
        <taxon>Laurasiatheria</taxon>
        <taxon>Artiodactyla</taxon>
        <taxon>Ruminantia</taxon>
        <taxon>Pecora</taxon>
        <taxon>Bovidae</taxon>
        <taxon>Bovinae</taxon>
        <taxon>Bos</taxon>
    </lineage>
</organism>